<dbReference type="EMBL" id="AF056034">
    <property type="protein sequence ID" value="AAC95128.1"/>
    <property type="molecule type" value="mRNA"/>
</dbReference>
<dbReference type="EMBL" id="AF056035">
    <property type="protein sequence ID" value="AAC95129.1"/>
    <property type="molecule type" value="mRNA"/>
</dbReference>
<dbReference type="RefSeq" id="NP_631976.1">
    <molecule id="Q9Z2J4-1"/>
    <property type="nucleotide sequence ID" value="NM_139230.2"/>
</dbReference>
<dbReference type="RefSeq" id="NP_631977.1">
    <molecule id="Q9Z2J4-2"/>
    <property type="nucleotide sequence ID" value="NM_139231.2"/>
</dbReference>
<dbReference type="RefSeq" id="XP_006233545.1">
    <property type="nucleotide sequence ID" value="XM_006233483.3"/>
</dbReference>
<dbReference type="RefSeq" id="XP_006233546.1">
    <property type="nucleotide sequence ID" value="XM_006233484.2"/>
</dbReference>
<dbReference type="RefSeq" id="XP_038957655.1">
    <molecule id="Q9Z2J4-2"/>
    <property type="nucleotide sequence ID" value="XM_039101727.2"/>
</dbReference>
<dbReference type="SMR" id="Q9Z2J4"/>
<dbReference type="BioGRID" id="251522">
    <property type="interactions" value="1"/>
</dbReference>
<dbReference type="FunCoup" id="Q9Z2J4">
    <property type="interactions" value="265"/>
</dbReference>
<dbReference type="STRING" id="10116.ENSRNOP00000073825"/>
<dbReference type="iPTMnet" id="Q9Z2J4"/>
<dbReference type="PhosphoSitePlus" id="Q9Z2J4"/>
<dbReference type="PaxDb" id="10116-ENSRNOP00000016968"/>
<dbReference type="Ensembl" id="ENSRNOT00000099274.1">
    <molecule id="Q9Z2J4-1"/>
    <property type="protein sequence ID" value="ENSRNOP00000080182.1"/>
    <property type="gene ID" value="ENSRNOG00000012512.8"/>
</dbReference>
<dbReference type="GeneID" id="246172"/>
<dbReference type="KEGG" id="rno:246172"/>
<dbReference type="AGR" id="RGD:708354"/>
<dbReference type="CTD" id="91624"/>
<dbReference type="RGD" id="708354">
    <property type="gene designation" value="Nexn"/>
</dbReference>
<dbReference type="eggNOG" id="ENOG502QU7W">
    <property type="taxonomic scope" value="Eukaryota"/>
</dbReference>
<dbReference type="GeneTree" id="ENSGT00730000111176"/>
<dbReference type="InParanoid" id="Q9Z2J4"/>
<dbReference type="OrthoDB" id="8946843at2759"/>
<dbReference type="PhylomeDB" id="Q9Z2J4"/>
<dbReference type="PRO" id="PR:Q9Z2J4"/>
<dbReference type="Proteomes" id="UP000002494">
    <property type="component" value="Chromosome 2"/>
</dbReference>
<dbReference type="Bgee" id="ENSRNOG00000012512">
    <property type="expression patterns" value="Expressed in quadriceps femoris and 20 other cell types or tissues"/>
</dbReference>
<dbReference type="ExpressionAtlas" id="Q9Z2J4">
    <property type="expression patterns" value="baseline and differential"/>
</dbReference>
<dbReference type="GO" id="GO:0005912">
    <property type="term" value="C:adherens junction"/>
    <property type="evidence" value="ECO:0007669"/>
    <property type="project" value="UniProtKB-SubCell"/>
</dbReference>
<dbReference type="GO" id="GO:0030424">
    <property type="term" value="C:axon"/>
    <property type="evidence" value="ECO:0000318"/>
    <property type="project" value="GO_Central"/>
</dbReference>
<dbReference type="GO" id="GO:0030055">
    <property type="term" value="C:cell-substrate junction"/>
    <property type="evidence" value="ECO:0000314"/>
    <property type="project" value="RGD"/>
</dbReference>
<dbReference type="GO" id="GO:0005856">
    <property type="term" value="C:cytoskeleton"/>
    <property type="evidence" value="ECO:0007669"/>
    <property type="project" value="UniProtKB-SubCell"/>
</dbReference>
<dbReference type="GO" id="GO:0005925">
    <property type="term" value="C:focal adhesion"/>
    <property type="evidence" value="ECO:0000314"/>
    <property type="project" value="UniProtKB"/>
</dbReference>
<dbReference type="GO" id="GO:0005886">
    <property type="term" value="C:plasma membrane"/>
    <property type="evidence" value="ECO:0000318"/>
    <property type="project" value="GO_Central"/>
</dbReference>
<dbReference type="GO" id="GO:0030018">
    <property type="term" value="C:Z disc"/>
    <property type="evidence" value="ECO:0000314"/>
    <property type="project" value="UniProtKB"/>
</dbReference>
<dbReference type="GO" id="GO:0051015">
    <property type="term" value="F:actin filament binding"/>
    <property type="evidence" value="ECO:0000314"/>
    <property type="project" value="RGD"/>
</dbReference>
<dbReference type="GO" id="GO:0098632">
    <property type="term" value="F:cell-cell adhesion mediator activity"/>
    <property type="evidence" value="ECO:0000318"/>
    <property type="project" value="GO_Central"/>
</dbReference>
<dbReference type="GO" id="GO:0008307">
    <property type="term" value="F:structural constituent of muscle"/>
    <property type="evidence" value="ECO:0000250"/>
    <property type="project" value="UniProtKB"/>
</dbReference>
<dbReference type="GO" id="GO:0007411">
    <property type="term" value="P:axon guidance"/>
    <property type="evidence" value="ECO:0000318"/>
    <property type="project" value="GO_Central"/>
</dbReference>
<dbReference type="GO" id="GO:0070593">
    <property type="term" value="P:dendrite self-avoidance"/>
    <property type="evidence" value="ECO:0000318"/>
    <property type="project" value="GO_Central"/>
</dbReference>
<dbReference type="GO" id="GO:0007156">
    <property type="term" value="P:homophilic cell adhesion via plasma membrane adhesion molecules"/>
    <property type="evidence" value="ECO:0000318"/>
    <property type="project" value="GO_Central"/>
</dbReference>
<dbReference type="GO" id="GO:0030334">
    <property type="term" value="P:regulation of cell migration"/>
    <property type="evidence" value="ECO:0000250"/>
    <property type="project" value="UniProtKB"/>
</dbReference>
<dbReference type="GO" id="GO:0051493">
    <property type="term" value="P:regulation of cytoskeleton organization"/>
    <property type="evidence" value="ECO:0000250"/>
    <property type="project" value="UniProtKB"/>
</dbReference>
<dbReference type="GO" id="GO:0009617">
    <property type="term" value="P:response to bacterium"/>
    <property type="evidence" value="ECO:0000266"/>
    <property type="project" value="RGD"/>
</dbReference>
<dbReference type="FunFam" id="2.60.40.10:FF:000425">
    <property type="entry name" value="Myosin light chain kinase"/>
    <property type="match status" value="1"/>
</dbReference>
<dbReference type="Gene3D" id="2.60.40.10">
    <property type="entry name" value="Immunoglobulins"/>
    <property type="match status" value="1"/>
</dbReference>
<dbReference type="InterPro" id="IPR007110">
    <property type="entry name" value="Ig-like_dom"/>
</dbReference>
<dbReference type="InterPro" id="IPR036179">
    <property type="entry name" value="Ig-like_dom_sf"/>
</dbReference>
<dbReference type="InterPro" id="IPR013783">
    <property type="entry name" value="Ig-like_fold"/>
</dbReference>
<dbReference type="InterPro" id="IPR013098">
    <property type="entry name" value="Ig_I-set"/>
</dbReference>
<dbReference type="InterPro" id="IPR003599">
    <property type="entry name" value="Ig_sub"/>
</dbReference>
<dbReference type="PANTHER" id="PTHR21508">
    <property type="entry name" value="MITOGUARDIN"/>
    <property type="match status" value="1"/>
</dbReference>
<dbReference type="PANTHER" id="PTHR21508:SF4">
    <property type="entry name" value="MITOGUARDIN 2"/>
    <property type="match status" value="1"/>
</dbReference>
<dbReference type="Pfam" id="PF07679">
    <property type="entry name" value="I-set"/>
    <property type="match status" value="1"/>
</dbReference>
<dbReference type="SMART" id="SM00409">
    <property type="entry name" value="IG"/>
    <property type="match status" value="1"/>
</dbReference>
<dbReference type="SUPFAM" id="SSF48726">
    <property type="entry name" value="Immunoglobulin"/>
    <property type="match status" value="1"/>
</dbReference>
<dbReference type="PROSITE" id="PS50835">
    <property type="entry name" value="IG_LIKE"/>
    <property type="match status" value="1"/>
</dbReference>
<protein>
    <recommendedName>
        <fullName>Nexilin</fullName>
    </recommendedName>
</protein>
<feature type="chain" id="PRO_0000302087" description="Nexilin">
    <location>
        <begin position="1"/>
        <end position="656"/>
    </location>
</feature>
<feature type="domain" description="Ig-like" evidence="3">
    <location>
        <begin position="562"/>
        <end position="650"/>
    </location>
</feature>
<feature type="region of interest" description="Disordered" evidence="4">
    <location>
        <begin position="1"/>
        <end position="131"/>
    </location>
</feature>
<feature type="region of interest" description="Disordered" evidence="4">
    <location>
        <begin position="165"/>
        <end position="198"/>
    </location>
</feature>
<feature type="region of interest" description="Disordered" evidence="4">
    <location>
        <begin position="215"/>
        <end position="284"/>
    </location>
</feature>
<feature type="region of interest" description="Disordered" evidence="4">
    <location>
        <begin position="468"/>
        <end position="492"/>
    </location>
</feature>
<feature type="region of interest" description="Disordered" evidence="4">
    <location>
        <begin position="529"/>
        <end position="564"/>
    </location>
</feature>
<feature type="compositionally biased region" description="Low complexity" evidence="4">
    <location>
        <begin position="11"/>
        <end position="26"/>
    </location>
</feature>
<feature type="compositionally biased region" description="Basic and acidic residues" evidence="4">
    <location>
        <begin position="27"/>
        <end position="78"/>
    </location>
</feature>
<feature type="compositionally biased region" description="Basic and acidic residues" evidence="4">
    <location>
        <begin position="103"/>
        <end position="131"/>
    </location>
</feature>
<feature type="compositionally biased region" description="Basic and acidic residues" evidence="4">
    <location>
        <begin position="169"/>
        <end position="198"/>
    </location>
</feature>
<feature type="compositionally biased region" description="Basic and acidic residues" evidence="4">
    <location>
        <begin position="216"/>
        <end position="269"/>
    </location>
</feature>
<feature type="modified residue" description="Phosphoserine" evidence="11">
    <location>
        <position position="80"/>
    </location>
</feature>
<feature type="modified residue" description="Phosphoserine" evidence="2">
    <location>
        <position position="221"/>
    </location>
</feature>
<feature type="modified residue" description="Phosphoserine" evidence="11">
    <location>
        <position position="330"/>
    </location>
</feature>
<feature type="modified residue" description="Phosphoserine" evidence="11">
    <location>
        <position position="337"/>
    </location>
</feature>
<feature type="modified residue" description="Phosphoserine" evidence="11">
    <location>
        <position position="345"/>
    </location>
</feature>
<feature type="modified residue" description="Phosphothreonine" evidence="2">
    <location>
        <position position="350"/>
    </location>
</feature>
<feature type="modified residue" description="Phosphoserine" evidence="11">
    <location>
        <position position="544"/>
    </location>
</feature>
<feature type="modified residue" description="Phosphoserine" evidence="11">
    <location>
        <position position="549"/>
    </location>
</feature>
<feature type="modified residue" description="Phosphothreonine" evidence="11">
    <location>
        <position position="551"/>
    </location>
</feature>
<feature type="splice variant" id="VSP_052528" description="In isoform 2." evidence="7">
    <location>
        <begin position="11"/>
        <end position="74"/>
    </location>
</feature>
<feature type="splice variant" id="VSP_052529" description="In isoform 2." evidence="7">
    <original>Q</original>
    <variation>QIEDINNTGTESASE</variation>
    <location>
        <position position="148"/>
    </location>
</feature>
<organism>
    <name type="scientific">Rattus norvegicus</name>
    <name type="common">Rat</name>
    <dbReference type="NCBI Taxonomy" id="10116"/>
    <lineage>
        <taxon>Eukaryota</taxon>
        <taxon>Metazoa</taxon>
        <taxon>Chordata</taxon>
        <taxon>Craniata</taxon>
        <taxon>Vertebrata</taxon>
        <taxon>Euteleostomi</taxon>
        <taxon>Mammalia</taxon>
        <taxon>Eutheria</taxon>
        <taxon>Euarchontoglires</taxon>
        <taxon>Glires</taxon>
        <taxon>Rodentia</taxon>
        <taxon>Myomorpha</taxon>
        <taxon>Muroidea</taxon>
        <taxon>Muridae</taxon>
        <taxon>Murinae</taxon>
        <taxon>Rattus</taxon>
    </lineage>
</organism>
<evidence type="ECO:0000250" key="1"/>
<evidence type="ECO:0000250" key="2">
    <source>
        <dbReference type="UniProtKB" id="Q0ZGT2"/>
    </source>
</evidence>
<evidence type="ECO:0000255" key="3"/>
<evidence type="ECO:0000256" key="4">
    <source>
        <dbReference type="SAM" id="MobiDB-lite"/>
    </source>
</evidence>
<evidence type="ECO:0000269" key="5">
    <source>
    </source>
</evidence>
<evidence type="ECO:0000269" key="6">
    <source>
    </source>
</evidence>
<evidence type="ECO:0000303" key="7">
    <source>
    </source>
</evidence>
<evidence type="ECO:0000305" key="8"/>
<evidence type="ECO:0000312" key="9">
    <source>
        <dbReference type="EMBL" id="AAC95128.1"/>
    </source>
</evidence>
<evidence type="ECO:0000312" key="10">
    <source>
        <dbReference type="RGD" id="708354"/>
    </source>
</evidence>
<evidence type="ECO:0007744" key="11">
    <source>
    </source>
</evidence>
<gene>
    <name evidence="10" type="primary">Nexn</name>
</gene>
<comment type="function">
    <text evidence="1">Involved in regulating cell migration through association with the actin cytoskeleton. Has an essential role in the maintenance of Z line and sarcomere integrity.</text>
</comment>
<comment type="subunit">
    <text evidence="6">Interacts with F-actin.</text>
</comment>
<comment type="subcellular location">
    <subcellularLocation>
        <location evidence="6">Cytoplasm</location>
        <location evidence="6">Cytoskeleton</location>
    </subcellularLocation>
    <subcellularLocation>
        <location evidence="6">Cell junction</location>
        <location evidence="6">Adherens junction</location>
    </subcellularLocation>
    <subcellularLocation>
        <location evidence="5">Cytoplasm</location>
        <location evidence="5">Myofibril</location>
        <location evidence="5">Sarcomere</location>
        <location evidence="5">Z line</location>
    </subcellularLocation>
    <text>Localizes to the cell-matrix AJ (PubMed:9832551). Not found at the cell-cell AJ (PubMed:9832551).</text>
</comment>
<comment type="alternative products">
    <event type="alternative splicing"/>
    <isoform>
        <id>Q9Z2J4-1</id>
        <name evidence="6">1</name>
        <name evidence="6">b-Nexilin</name>
        <sequence type="displayed"/>
    </isoform>
    <isoform>
        <id>Q9Z2J4-2</id>
        <name evidence="6">2</name>
        <name evidence="6">s-Nexilin</name>
        <sequence type="described" ref="VSP_052528 VSP_052529"/>
    </isoform>
</comment>
<comment type="tissue specificity">
    <text evidence="6">Expressed in brain, testis, spleen and fibroblasts (at protein level). Not detected in liver, kidney or epithelial cells (at protein level).</text>
</comment>
<keyword id="KW-0009">Actin-binding</keyword>
<keyword id="KW-0025">Alternative splicing</keyword>
<keyword id="KW-0965">Cell junction</keyword>
<keyword id="KW-0963">Cytoplasm</keyword>
<keyword id="KW-0206">Cytoskeleton</keyword>
<keyword id="KW-0393">Immunoglobulin domain</keyword>
<keyword id="KW-0597">Phosphoprotein</keyword>
<keyword id="KW-1185">Reference proteome</keyword>
<sequence>MNDVSQKAEILLSSSKPVPKSYVPKLGKGDVKDKFEAMQRAREERNQRRSRDEKQRRKEQYIREREWNRRKQEIKDMLASDEEEEPSKVEKAYVPKLTGTVKGKFDEMEKHRQEEQRKRTEEERKRRIEQDLLEKRKMQRELAKRAEQEGDDSLLITVVPAKSYRAAANRKDPEDLDREHRNGRVSQEEEKTRHEEECRALKEAKCLSLVMDDETEAKKESRFPGKLKSTFEELERQRQENRKKQAEEEARRRLEEERRAFEEARRNMVNEEDESQDTETVFKEYRPGKLRLSFEEIERQRREEEKRKAEEEARRRMEEEKKAFAEARRSMVLDDDSPEIYKAVSQESLTPGKLEINFEQLLRQKMEEERRRTEEERRQKLEMEKQEFEQLRQEMGKEEEENESFGLSREYEELIKLKRSGSIQAKNLKSKFEKIGQLSEKEVQKKIEEERAKRRAIDLEIKEREAENFHEDDDVDVKPAKKSESPFTHKVNMKARFEQMAKARQEEEQRRIEEQKLLRMQFEQKEIDAALQKKREDDEEEEGSIVNGSTTEDEEQTRSGAPWFKKPLRNTSVVDSEPVRFTVKVTGEPKPEVTWWFEGELLQDGEDYQYIERGETYCLYLPETFPEDGGEYMCKAVNSKGSAASTCILTIEMDDY</sequence>
<name>NEXN_RAT</name>
<accession>Q9Z2J4</accession>
<accession>Q9Z2J3</accession>
<reference evidence="8 9" key="1">
    <citation type="journal article" date="1998" name="J. Cell Biol.">
        <title>Nexilin: a novel actin filament-binding protein localized at cell-matrix adherens junction.</title>
        <authorList>
            <person name="Ohtsuka T."/>
            <person name="Nakanishi H."/>
            <person name="Ikeda W."/>
            <person name="Satoh A."/>
            <person name="Momose Y."/>
            <person name="Nishioka H."/>
            <person name="Takai Y."/>
        </authorList>
    </citation>
    <scope>NUCLEOTIDE SEQUENCE [MRNA] (ISOFORMS 1 AND 2)</scope>
    <scope>INTERACTION WITH F-ACTIN</scope>
    <scope>SUBCELLULAR LOCATION</scope>
    <scope>TISSUE SPECIFICITY</scope>
</reference>
<reference key="2">
    <citation type="journal article" date="2009" name="Nat. Med.">
        <title>Nexilin mutations destabilize cardiac Z-disks and lead to dilated cardiomyopathy.</title>
        <authorList>
            <person name="Hassel D."/>
            <person name="Dahme T."/>
            <person name="Erdmann J."/>
            <person name="Meder B."/>
            <person name="Huge A."/>
            <person name="Stoll M."/>
            <person name="Just S."/>
            <person name="Hess A."/>
            <person name="Ehlermann P."/>
            <person name="Weichenhan D."/>
            <person name="Grimmler M."/>
            <person name="Liptau H."/>
            <person name="Hetzer R."/>
            <person name="Regitz-Zagrosek V."/>
            <person name="Fischer C."/>
            <person name="Nurnberg P."/>
            <person name="Schunkert H."/>
            <person name="Katus H.A."/>
            <person name="Rottbauer W."/>
        </authorList>
    </citation>
    <scope>SUBCELLULAR LOCATION</scope>
</reference>
<reference key="3">
    <citation type="journal article" date="2012" name="Nat. Commun.">
        <title>Quantitative maps of protein phosphorylation sites across 14 different rat organs and tissues.</title>
        <authorList>
            <person name="Lundby A."/>
            <person name="Secher A."/>
            <person name="Lage K."/>
            <person name="Nordsborg N.B."/>
            <person name="Dmytriyev A."/>
            <person name="Lundby C."/>
            <person name="Olsen J.V."/>
        </authorList>
    </citation>
    <scope>PHOSPHORYLATION [LARGE SCALE ANALYSIS] AT SER-80; SER-330; SER-337; SER-345; SER-544; SER-549 AND THR-551</scope>
    <scope>IDENTIFICATION BY MASS SPECTROMETRY [LARGE SCALE ANALYSIS]</scope>
</reference>
<proteinExistence type="evidence at protein level"/>